<accession>C5DTG4</accession>
<gene>
    <name type="primary">RGI1</name>
    <name type="ordered locus">ZYRO0C08338g</name>
</gene>
<name>RGI1_ZYGRC</name>
<keyword id="KW-1003">Cell membrane</keyword>
<keyword id="KW-0472">Membrane</keyword>
<keyword id="KW-1185">Reference proteome</keyword>
<evidence type="ECO:0000250" key="1"/>
<evidence type="ECO:0000305" key="2"/>
<proteinExistence type="inferred from homology"/>
<organism>
    <name type="scientific">Zygosaccharomyces rouxii (strain ATCC 2623 / CBS 732 / NBRC 1130 / NCYC 568 / NRRL Y-229)</name>
    <dbReference type="NCBI Taxonomy" id="559307"/>
    <lineage>
        <taxon>Eukaryota</taxon>
        <taxon>Fungi</taxon>
        <taxon>Dikarya</taxon>
        <taxon>Ascomycota</taxon>
        <taxon>Saccharomycotina</taxon>
        <taxon>Saccharomycetes</taxon>
        <taxon>Saccharomycetales</taxon>
        <taxon>Saccharomycetaceae</taxon>
        <taxon>Zygosaccharomyces</taxon>
    </lineage>
</organism>
<protein>
    <recommendedName>
        <fullName>Respiratory growth induced protein 1</fullName>
    </recommendedName>
</protein>
<reference key="1">
    <citation type="journal article" date="2009" name="Genome Res.">
        <title>Comparative genomics of protoploid Saccharomycetaceae.</title>
        <authorList>
            <consortium name="The Genolevures Consortium"/>
            <person name="Souciet J.-L."/>
            <person name="Dujon B."/>
            <person name="Gaillardin C."/>
            <person name="Johnston M."/>
            <person name="Baret P.V."/>
            <person name="Cliften P."/>
            <person name="Sherman D.J."/>
            <person name="Weissenbach J."/>
            <person name="Westhof E."/>
            <person name="Wincker P."/>
            <person name="Jubin C."/>
            <person name="Poulain J."/>
            <person name="Barbe V."/>
            <person name="Segurens B."/>
            <person name="Artiguenave F."/>
            <person name="Anthouard V."/>
            <person name="Vacherie B."/>
            <person name="Val M.-E."/>
            <person name="Fulton R.S."/>
            <person name="Minx P."/>
            <person name="Wilson R."/>
            <person name="Durrens P."/>
            <person name="Jean G."/>
            <person name="Marck C."/>
            <person name="Martin T."/>
            <person name="Nikolski M."/>
            <person name="Rolland T."/>
            <person name="Seret M.-L."/>
            <person name="Casaregola S."/>
            <person name="Despons L."/>
            <person name="Fairhead C."/>
            <person name="Fischer G."/>
            <person name="Lafontaine I."/>
            <person name="Leh V."/>
            <person name="Lemaire M."/>
            <person name="de Montigny J."/>
            <person name="Neuveglise C."/>
            <person name="Thierry A."/>
            <person name="Blanc-Lenfle I."/>
            <person name="Bleykasten C."/>
            <person name="Diffels J."/>
            <person name="Fritsch E."/>
            <person name="Frangeul L."/>
            <person name="Goeffon A."/>
            <person name="Jauniaux N."/>
            <person name="Kachouri-Lafond R."/>
            <person name="Payen C."/>
            <person name="Potier S."/>
            <person name="Pribylova L."/>
            <person name="Ozanne C."/>
            <person name="Richard G.-F."/>
            <person name="Sacerdot C."/>
            <person name="Straub M.-L."/>
            <person name="Talla E."/>
        </authorList>
    </citation>
    <scope>NUCLEOTIDE SEQUENCE [LARGE SCALE GENOMIC DNA]</scope>
    <source>
        <strain>ATCC 2623 / CBS 732 / BCRC 21506 / NBRC 1130 / NCYC 568 / NRRL Y-229</strain>
    </source>
</reference>
<dbReference type="EMBL" id="CU928175">
    <property type="protein sequence ID" value="CAR27075.1"/>
    <property type="molecule type" value="Genomic_DNA"/>
</dbReference>
<dbReference type="RefSeq" id="XP_002496008.1">
    <property type="nucleotide sequence ID" value="XM_002495963.1"/>
</dbReference>
<dbReference type="SMR" id="C5DTG4"/>
<dbReference type="FunCoup" id="C5DTG4">
    <property type="interactions" value="121"/>
</dbReference>
<dbReference type="GeneID" id="8203218"/>
<dbReference type="KEGG" id="zro:ZYRO0C08338g"/>
<dbReference type="HOGENOM" id="CLU_118207_0_0_1"/>
<dbReference type="InParanoid" id="C5DTG4"/>
<dbReference type="Proteomes" id="UP000008536">
    <property type="component" value="Chromosome C"/>
</dbReference>
<dbReference type="GO" id="GO:0005886">
    <property type="term" value="C:plasma membrane"/>
    <property type="evidence" value="ECO:0007669"/>
    <property type="project" value="UniProtKB-SubCell"/>
</dbReference>
<dbReference type="GO" id="GO:0006112">
    <property type="term" value="P:energy reserve metabolic process"/>
    <property type="evidence" value="ECO:0007669"/>
    <property type="project" value="InterPro"/>
</dbReference>
<dbReference type="Gene3D" id="3.40.1000.40">
    <property type="entry name" value="Respiratory growth induced protein 1"/>
    <property type="match status" value="1"/>
</dbReference>
<dbReference type="InterPro" id="IPR022554">
    <property type="entry name" value="RGI1"/>
</dbReference>
<dbReference type="InterPro" id="IPR038235">
    <property type="entry name" value="RGI1_sf"/>
</dbReference>
<dbReference type="Pfam" id="PF10843">
    <property type="entry name" value="RGI1"/>
    <property type="match status" value="1"/>
</dbReference>
<sequence length="161" mass="18849">MAKKNKGPKVTTVTNKQGETLQVFETLEDFETFIKQETEDDEFDHIHCVLNYYPPFLLHHSHNDPEKISDQNNCHSRKFVRHLHQHVEKHLLKDLAVALQSPDLKFSNKSKDQTFEKIVWLYNDDASYHDKPFHVAVEVTARHDDALVNVDYRTTPRTIAV</sequence>
<feature type="chain" id="PRO_0000402297" description="Respiratory growth induced protein 1">
    <location>
        <begin position="1"/>
        <end position="161"/>
    </location>
</feature>
<comment type="function">
    <text evidence="1">Involved in the control of energetic metabolism and significantly contribute to cell fitness, especially under respiratory growth conditions.</text>
</comment>
<comment type="subcellular location">
    <subcellularLocation>
        <location evidence="1">Cell membrane</location>
        <topology evidence="1">Peripheral membrane protein</topology>
    </subcellularLocation>
</comment>
<comment type="similarity">
    <text evidence="2">Belongs to the RGI1 family.</text>
</comment>